<protein>
    <recommendedName>
        <fullName evidence="1">Imidazoleglycerol-phosphate dehydratase</fullName>
        <shortName evidence="1">IGPD</shortName>
        <ecNumber evidence="1">4.2.1.19</ecNumber>
    </recommendedName>
</protein>
<sequence>MTNTEVGKTTRRARIERRTSESDIVVELDLDGTGQVHIDTGVSFYDHMLTALGSHASFDLTVCTKGDVEIEAHHTIEDTAIALGQAFGQALGNKKGIRRFGDAFIPMDETLVHAVVDVSGRPYCVHTGEPDHLQHNIISGSSVPYSTVINRHVFESLAANARIALHVRVLYGRDPHHITEAQYKAVARALSEAVKFDPRFSGVPSTKGVL</sequence>
<organism>
    <name type="scientific">Mycobacterium leprae (strain Br4923)</name>
    <dbReference type="NCBI Taxonomy" id="561304"/>
    <lineage>
        <taxon>Bacteria</taxon>
        <taxon>Bacillati</taxon>
        <taxon>Actinomycetota</taxon>
        <taxon>Actinomycetes</taxon>
        <taxon>Mycobacteriales</taxon>
        <taxon>Mycobacteriaceae</taxon>
        <taxon>Mycobacterium</taxon>
    </lineage>
</organism>
<dbReference type="EC" id="4.2.1.19" evidence="1"/>
<dbReference type="EMBL" id="FM211192">
    <property type="protein sequence ID" value="CAR71354.1"/>
    <property type="molecule type" value="Genomic_DNA"/>
</dbReference>
<dbReference type="SMR" id="B8ZRB1"/>
<dbReference type="KEGG" id="mlb:MLBr01259"/>
<dbReference type="HOGENOM" id="CLU_044308_3_0_11"/>
<dbReference type="UniPathway" id="UPA00031">
    <property type="reaction ID" value="UER00011"/>
</dbReference>
<dbReference type="Proteomes" id="UP000006900">
    <property type="component" value="Chromosome"/>
</dbReference>
<dbReference type="GO" id="GO:0005737">
    <property type="term" value="C:cytoplasm"/>
    <property type="evidence" value="ECO:0007669"/>
    <property type="project" value="UniProtKB-SubCell"/>
</dbReference>
<dbReference type="GO" id="GO:0004424">
    <property type="term" value="F:imidazoleglycerol-phosphate dehydratase activity"/>
    <property type="evidence" value="ECO:0007669"/>
    <property type="project" value="UniProtKB-UniRule"/>
</dbReference>
<dbReference type="GO" id="GO:0000105">
    <property type="term" value="P:L-histidine biosynthetic process"/>
    <property type="evidence" value="ECO:0007669"/>
    <property type="project" value="UniProtKB-UniRule"/>
</dbReference>
<dbReference type="CDD" id="cd07914">
    <property type="entry name" value="IGPD"/>
    <property type="match status" value="1"/>
</dbReference>
<dbReference type="FunFam" id="3.30.230.40:FF:000001">
    <property type="entry name" value="Imidazoleglycerol-phosphate dehydratase HisB"/>
    <property type="match status" value="1"/>
</dbReference>
<dbReference type="FunFam" id="3.30.230.40:FF:000003">
    <property type="entry name" value="Imidazoleglycerol-phosphate dehydratase HisB"/>
    <property type="match status" value="1"/>
</dbReference>
<dbReference type="Gene3D" id="3.30.230.40">
    <property type="entry name" value="Imidazole glycerol phosphate dehydratase, domain 1"/>
    <property type="match status" value="2"/>
</dbReference>
<dbReference type="HAMAP" id="MF_00076">
    <property type="entry name" value="HisB"/>
    <property type="match status" value="1"/>
</dbReference>
<dbReference type="InterPro" id="IPR038494">
    <property type="entry name" value="IGPD_sf"/>
</dbReference>
<dbReference type="InterPro" id="IPR000807">
    <property type="entry name" value="ImidazoleglycerolP_deHydtase"/>
</dbReference>
<dbReference type="InterPro" id="IPR020565">
    <property type="entry name" value="ImidazoleglycerP_deHydtase_CS"/>
</dbReference>
<dbReference type="InterPro" id="IPR020568">
    <property type="entry name" value="Ribosomal_Su5_D2-typ_SF"/>
</dbReference>
<dbReference type="NCBIfam" id="NF002110">
    <property type="entry name" value="PRK00951.1-6"/>
    <property type="match status" value="1"/>
</dbReference>
<dbReference type="NCBIfam" id="NF002111">
    <property type="entry name" value="PRK00951.2-1"/>
    <property type="match status" value="1"/>
</dbReference>
<dbReference type="NCBIfam" id="NF002114">
    <property type="entry name" value="PRK00951.2-4"/>
    <property type="match status" value="1"/>
</dbReference>
<dbReference type="PANTHER" id="PTHR23133:SF2">
    <property type="entry name" value="IMIDAZOLEGLYCEROL-PHOSPHATE DEHYDRATASE"/>
    <property type="match status" value="1"/>
</dbReference>
<dbReference type="PANTHER" id="PTHR23133">
    <property type="entry name" value="IMIDAZOLEGLYCEROL-PHOSPHATE DEHYDRATASE HIS7"/>
    <property type="match status" value="1"/>
</dbReference>
<dbReference type="Pfam" id="PF00475">
    <property type="entry name" value="IGPD"/>
    <property type="match status" value="1"/>
</dbReference>
<dbReference type="SUPFAM" id="SSF54211">
    <property type="entry name" value="Ribosomal protein S5 domain 2-like"/>
    <property type="match status" value="2"/>
</dbReference>
<dbReference type="PROSITE" id="PS00954">
    <property type="entry name" value="IGP_DEHYDRATASE_1"/>
    <property type="match status" value="1"/>
</dbReference>
<dbReference type="PROSITE" id="PS00955">
    <property type="entry name" value="IGP_DEHYDRATASE_2"/>
    <property type="match status" value="1"/>
</dbReference>
<feature type="chain" id="PRO_1000190619" description="Imidazoleglycerol-phosphate dehydratase">
    <location>
        <begin position="1"/>
        <end position="210"/>
    </location>
</feature>
<accession>B8ZRB1</accession>
<gene>
    <name evidence="1" type="primary">hisB</name>
    <name type="ordered locus">MLBr01259</name>
</gene>
<proteinExistence type="inferred from homology"/>
<comment type="catalytic activity">
    <reaction evidence="1">
        <text>D-erythro-1-(imidazol-4-yl)glycerol 3-phosphate = 3-(imidazol-4-yl)-2-oxopropyl phosphate + H2O</text>
        <dbReference type="Rhea" id="RHEA:11040"/>
        <dbReference type="ChEBI" id="CHEBI:15377"/>
        <dbReference type="ChEBI" id="CHEBI:57766"/>
        <dbReference type="ChEBI" id="CHEBI:58278"/>
        <dbReference type="EC" id="4.2.1.19"/>
    </reaction>
</comment>
<comment type="pathway">
    <text evidence="1">Amino-acid biosynthesis; L-histidine biosynthesis; L-histidine from 5-phospho-alpha-D-ribose 1-diphosphate: step 6/9.</text>
</comment>
<comment type="subcellular location">
    <subcellularLocation>
        <location evidence="1">Cytoplasm</location>
    </subcellularLocation>
</comment>
<comment type="similarity">
    <text evidence="1">Belongs to the imidazoleglycerol-phosphate dehydratase family.</text>
</comment>
<name>HIS7_MYCLB</name>
<reference key="1">
    <citation type="journal article" date="2009" name="Nat. Genet.">
        <title>Comparative genomic and phylogeographic analysis of Mycobacterium leprae.</title>
        <authorList>
            <person name="Monot M."/>
            <person name="Honore N."/>
            <person name="Garnier T."/>
            <person name="Zidane N."/>
            <person name="Sherafi D."/>
            <person name="Paniz-Mondolfi A."/>
            <person name="Matsuoka M."/>
            <person name="Taylor G.M."/>
            <person name="Donoghue H.D."/>
            <person name="Bouwman A."/>
            <person name="Mays S."/>
            <person name="Watson C."/>
            <person name="Lockwood D."/>
            <person name="Khamispour A."/>
            <person name="Dowlati Y."/>
            <person name="Jianping S."/>
            <person name="Rea T.H."/>
            <person name="Vera-Cabrera L."/>
            <person name="Stefani M.M."/>
            <person name="Banu S."/>
            <person name="Macdonald M."/>
            <person name="Sapkota B.R."/>
            <person name="Spencer J.S."/>
            <person name="Thomas J."/>
            <person name="Harshman K."/>
            <person name="Singh P."/>
            <person name="Busso P."/>
            <person name="Gattiker A."/>
            <person name="Rougemont J."/>
            <person name="Brennan P.J."/>
            <person name="Cole S.T."/>
        </authorList>
    </citation>
    <scope>NUCLEOTIDE SEQUENCE [LARGE SCALE GENOMIC DNA]</scope>
    <source>
        <strain>Br4923</strain>
    </source>
</reference>
<evidence type="ECO:0000255" key="1">
    <source>
        <dbReference type="HAMAP-Rule" id="MF_00076"/>
    </source>
</evidence>
<keyword id="KW-0028">Amino-acid biosynthesis</keyword>
<keyword id="KW-0963">Cytoplasm</keyword>
<keyword id="KW-0368">Histidine biosynthesis</keyword>
<keyword id="KW-0456">Lyase</keyword>